<name>NDUS3_BETTR</name>
<comment type="function">
    <text evidence="1">Core subunit of the mitochondrial membrane respiratory chain NADH dehydrogenase (Complex I) that is believed to belong to the minimal assembly required for catalysis. Complex I functions in the transfer of electrons from NADH to the respiratory chain. The immediate electron acceptor for the enzyme is believed to be ubiquinone (By similarity).</text>
</comment>
<comment type="catalytic activity">
    <reaction>
        <text>a ubiquinone + NADH + 5 H(+)(in) = a ubiquinol + NAD(+) + 4 H(+)(out)</text>
        <dbReference type="Rhea" id="RHEA:29091"/>
        <dbReference type="Rhea" id="RHEA-COMP:9565"/>
        <dbReference type="Rhea" id="RHEA-COMP:9566"/>
        <dbReference type="ChEBI" id="CHEBI:15378"/>
        <dbReference type="ChEBI" id="CHEBI:16389"/>
        <dbReference type="ChEBI" id="CHEBI:17976"/>
        <dbReference type="ChEBI" id="CHEBI:57540"/>
        <dbReference type="ChEBI" id="CHEBI:57945"/>
        <dbReference type="EC" id="7.1.1.2"/>
    </reaction>
</comment>
<comment type="subunit">
    <text evidence="1">Complex I is composed of about 45 different subunits. This is a component of the iron-sulfur (IP) fragment of the enzyme (By similarity).</text>
</comment>
<comment type="subcellular location">
    <subcellularLocation>
        <location>Mitochondrion inner membrane</location>
        <topology>Peripheral membrane protein</topology>
        <orientation>Matrix side</orientation>
    </subcellularLocation>
</comment>
<comment type="RNA editing">
    <location>
        <position position="31" evidence="1"/>
    </location>
    <location>
        <position position="38" evidence="1"/>
    </location>
    <location>
        <position position="100" evidence="1"/>
    </location>
    <location>
        <position position="110" evidence="1"/>
    </location>
    <location>
        <position position="123" evidence="1"/>
    </location>
</comment>
<comment type="similarity">
    <text evidence="2">Belongs to the complex I 30 kDa subunit family.</text>
</comment>
<keyword id="KW-0249">Electron transport</keyword>
<keyword id="KW-0472">Membrane</keyword>
<keyword id="KW-0496">Mitochondrion</keyword>
<keyword id="KW-0999">Mitochondrion inner membrane</keyword>
<keyword id="KW-0520">NAD</keyword>
<keyword id="KW-0560">Oxidoreductase</keyword>
<keyword id="KW-0679">Respiratory chain</keyword>
<keyword id="KW-0691">RNA editing</keyword>
<keyword id="KW-1278">Translocase</keyword>
<keyword id="KW-0813">Transport</keyword>
<keyword id="KW-0830">Ubiquinone</keyword>
<organism>
    <name type="scientific">Beta trigyna</name>
    <name type="common">Caucasian wild beet</name>
    <dbReference type="NCBI Taxonomy" id="19769"/>
    <lineage>
        <taxon>Eukaryota</taxon>
        <taxon>Viridiplantae</taxon>
        <taxon>Streptophyta</taxon>
        <taxon>Embryophyta</taxon>
        <taxon>Tracheophyta</taxon>
        <taxon>Spermatophyta</taxon>
        <taxon>Magnoliopsida</taxon>
        <taxon>eudicotyledons</taxon>
        <taxon>Gunneridae</taxon>
        <taxon>Pentapetalae</taxon>
        <taxon>Caryophyllales</taxon>
        <taxon>Chenopodiaceae</taxon>
        <taxon>Betoideae</taxon>
        <taxon>Beta</taxon>
    </lineage>
</organism>
<proteinExistence type="inferred from homology"/>
<gene>
    <name type="primary">NAD9</name>
</gene>
<evidence type="ECO:0000250" key="1"/>
<evidence type="ECO:0000305" key="2"/>
<geneLocation type="mitochondrion"/>
<protein>
    <recommendedName>
        <fullName>NADH dehydrogenase [ubiquinone] iron-sulfur protein 3</fullName>
        <ecNumber>7.1.1.2</ecNumber>
    </recommendedName>
    <alternativeName>
        <fullName>NADH dehydrogenase subunit 9</fullName>
    </alternativeName>
</protein>
<feature type="chain" id="PRO_0000118638" description="NADH dehydrogenase [ubiquinone] iron-sulfur protein 3">
    <location>
        <begin position="1"/>
        <end position="192"/>
    </location>
</feature>
<reference key="1">
    <citation type="journal article" date="1995" name="Curr. Genet.">
        <title>The chloroplast trnP-trnW-petG gene cluster in the mitochondrial genomes of Beta vulgaris, B. trigyna and B. webbiana: evolutionary aspects.</title>
        <authorList>
            <person name="Kubo T."/>
            <person name="Yanai Y."/>
            <person name="Kinoshita T."/>
            <person name="Mikami T."/>
        </authorList>
    </citation>
    <scope>NUCLEOTIDE SEQUENCE [GENOMIC DNA]</scope>
    <source>
        <strain>cv. SP753012-O</strain>
        <tissue>Leaf</tissue>
    </source>
</reference>
<dbReference type="EC" id="7.1.1.2"/>
<dbReference type="EMBL" id="D38017">
    <property type="protein sequence ID" value="BAA07214.1"/>
    <property type="status" value="ALT_SEQ"/>
    <property type="molecule type" value="Genomic_DNA"/>
</dbReference>
<dbReference type="SMR" id="Q33994"/>
<dbReference type="GO" id="GO:0005743">
    <property type="term" value="C:mitochondrial inner membrane"/>
    <property type="evidence" value="ECO:0007669"/>
    <property type="project" value="UniProtKB-SubCell"/>
</dbReference>
<dbReference type="GO" id="GO:0008137">
    <property type="term" value="F:NADH dehydrogenase (ubiquinone) activity"/>
    <property type="evidence" value="ECO:0007669"/>
    <property type="project" value="UniProtKB-EC"/>
</dbReference>
<dbReference type="FunFam" id="3.30.460.80:FF:000005">
    <property type="entry name" value="NADH dehydrogenase subunit 9"/>
    <property type="match status" value="1"/>
</dbReference>
<dbReference type="Gene3D" id="3.30.460.80">
    <property type="entry name" value="NADH:ubiquinone oxidoreductase, 30kDa subunit"/>
    <property type="match status" value="1"/>
</dbReference>
<dbReference type="HAMAP" id="MF_01357">
    <property type="entry name" value="NDH1_NuoC"/>
    <property type="match status" value="1"/>
</dbReference>
<dbReference type="InterPro" id="IPR010218">
    <property type="entry name" value="NADH_DH_suC"/>
</dbReference>
<dbReference type="InterPro" id="IPR037232">
    <property type="entry name" value="NADH_quin_OxRdtase_su_C/D-like"/>
</dbReference>
<dbReference type="InterPro" id="IPR001268">
    <property type="entry name" value="NADH_UbQ_OxRdtase_30kDa_su"/>
</dbReference>
<dbReference type="InterPro" id="IPR020396">
    <property type="entry name" value="NADH_UbQ_OxRdtase_CS"/>
</dbReference>
<dbReference type="NCBIfam" id="TIGR01961">
    <property type="entry name" value="NuoC_fam"/>
    <property type="match status" value="1"/>
</dbReference>
<dbReference type="NCBIfam" id="NF004733">
    <property type="entry name" value="PRK06074.1-5"/>
    <property type="match status" value="1"/>
</dbReference>
<dbReference type="PANTHER" id="PTHR10884:SF14">
    <property type="entry name" value="NADH DEHYDROGENASE [UBIQUINONE] IRON-SULFUR PROTEIN 3, MITOCHONDRIAL"/>
    <property type="match status" value="1"/>
</dbReference>
<dbReference type="PANTHER" id="PTHR10884">
    <property type="entry name" value="NADH DEHYDROGENASE UBIQUINONE IRON-SULFUR PROTEIN 3"/>
    <property type="match status" value="1"/>
</dbReference>
<dbReference type="Pfam" id="PF00329">
    <property type="entry name" value="Complex1_30kDa"/>
    <property type="match status" value="1"/>
</dbReference>
<dbReference type="SUPFAM" id="SSF143243">
    <property type="entry name" value="Nqo5-like"/>
    <property type="match status" value="1"/>
</dbReference>
<dbReference type="PROSITE" id="PS00542">
    <property type="entry name" value="COMPLEX1_30K"/>
    <property type="match status" value="1"/>
</dbReference>
<accession>Q33994</accession>
<sequence length="192" mass="23109">MDNQFIFKYSWETLPKKWVKKIEKSEHGNRFDTNTDYLFQLLCFLKLHTYTRFQVLIDICGVDYPSRKRRFEVVYNLLSTRYNSRIRLQTSADEVTRISSVVSLFPSAGWWEREVWDMFGVSFINHPDLRRILTDYGFEGHPLRKDFPLSGYVEVRYDDPEKRVVSEPIEMTQEFRYFDFASPWEQRNGNEG</sequence>